<keyword id="KW-0378">Hydrolase</keyword>
<keyword id="KW-0464">Manganese</keyword>
<keyword id="KW-1185">Reference proteome</keyword>
<dbReference type="EC" id="3.5.4.2" evidence="1"/>
<dbReference type="EMBL" id="CP000411">
    <property type="protein sequence ID" value="ABJ57323.1"/>
    <property type="molecule type" value="Genomic_DNA"/>
</dbReference>
<dbReference type="RefSeq" id="WP_011677717.1">
    <property type="nucleotide sequence ID" value="NC_008528.1"/>
</dbReference>
<dbReference type="SMR" id="Q04DZ9"/>
<dbReference type="STRING" id="203123.OEOE_1462"/>
<dbReference type="KEGG" id="ooe:OEOE_1462"/>
<dbReference type="PATRIC" id="fig|203123.7.peg.1482"/>
<dbReference type="eggNOG" id="COG1001">
    <property type="taxonomic scope" value="Bacteria"/>
</dbReference>
<dbReference type="HOGENOM" id="CLU_027935_0_0_9"/>
<dbReference type="Proteomes" id="UP000000774">
    <property type="component" value="Chromosome"/>
</dbReference>
<dbReference type="GO" id="GO:0000034">
    <property type="term" value="F:adenine deaminase activity"/>
    <property type="evidence" value="ECO:0007669"/>
    <property type="project" value="UniProtKB-UniRule"/>
</dbReference>
<dbReference type="GO" id="GO:0006146">
    <property type="term" value="P:adenine catabolic process"/>
    <property type="evidence" value="ECO:0007669"/>
    <property type="project" value="InterPro"/>
</dbReference>
<dbReference type="Gene3D" id="3.20.20.140">
    <property type="entry name" value="Metal-dependent hydrolases"/>
    <property type="match status" value="1"/>
</dbReference>
<dbReference type="Gene3D" id="2.30.40.10">
    <property type="entry name" value="Urease, subunit C, domain 1"/>
    <property type="match status" value="1"/>
</dbReference>
<dbReference type="HAMAP" id="MF_01518">
    <property type="entry name" value="Adenine_deamin"/>
    <property type="match status" value="1"/>
</dbReference>
<dbReference type="InterPro" id="IPR006679">
    <property type="entry name" value="Adenine_deam"/>
</dbReference>
<dbReference type="InterPro" id="IPR026912">
    <property type="entry name" value="Adenine_deam_C"/>
</dbReference>
<dbReference type="InterPro" id="IPR006680">
    <property type="entry name" value="Amidohydro-rel"/>
</dbReference>
<dbReference type="InterPro" id="IPR011059">
    <property type="entry name" value="Metal-dep_hydrolase_composite"/>
</dbReference>
<dbReference type="InterPro" id="IPR032466">
    <property type="entry name" value="Metal_Hydrolase"/>
</dbReference>
<dbReference type="PANTHER" id="PTHR11113:SF2">
    <property type="entry name" value="ADENINE DEAMINASE"/>
    <property type="match status" value="1"/>
</dbReference>
<dbReference type="PANTHER" id="PTHR11113">
    <property type="entry name" value="N-ACETYLGLUCOSAMINE-6-PHOSPHATE DEACETYLASE"/>
    <property type="match status" value="1"/>
</dbReference>
<dbReference type="Pfam" id="PF13382">
    <property type="entry name" value="Adenine_deam_C"/>
    <property type="match status" value="1"/>
</dbReference>
<dbReference type="Pfam" id="PF01979">
    <property type="entry name" value="Amidohydro_1"/>
    <property type="match status" value="1"/>
</dbReference>
<dbReference type="SUPFAM" id="SSF51338">
    <property type="entry name" value="Composite domain of metallo-dependent hydrolases"/>
    <property type="match status" value="1"/>
</dbReference>
<dbReference type="SUPFAM" id="SSF51556">
    <property type="entry name" value="Metallo-dependent hydrolases"/>
    <property type="match status" value="1"/>
</dbReference>
<gene>
    <name evidence="1" type="primary">ade2</name>
    <name type="ordered locus">OEOE_1462</name>
</gene>
<evidence type="ECO:0000255" key="1">
    <source>
        <dbReference type="HAMAP-Rule" id="MF_01518"/>
    </source>
</evidence>
<accession>Q04DZ9</accession>
<organism>
    <name type="scientific">Oenococcus oeni (strain ATCC BAA-331 / PSU-1)</name>
    <dbReference type="NCBI Taxonomy" id="203123"/>
    <lineage>
        <taxon>Bacteria</taxon>
        <taxon>Bacillati</taxon>
        <taxon>Bacillota</taxon>
        <taxon>Bacilli</taxon>
        <taxon>Lactobacillales</taxon>
        <taxon>Lactobacillaceae</taxon>
        <taxon>Oenococcus</taxon>
    </lineage>
</organism>
<comment type="catalytic activity">
    <reaction evidence="1">
        <text>adenine + H2O + H(+) = hypoxanthine + NH4(+)</text>
        <dbReference type="Rhea" id="RHEA:23688"/>
        <dbReference type="ChEBI" id="CHEBI:15377"/>
        <dbReference type="ChEBI" id="CHEBI:15378"/>
        <dbReference type="ChEBI" id="CHEBI:16708"/>
        <dbReference type="ChEBI" id="CHEBI:17368"/>
        <dbReference type="ChEBI" id="CHEBI:28938"/>
        <dbReference type="EC" id="3.5.4.2"/>
    </reaction>
</comment>
<comment type="cofactor">
    <cofactor evidence="1">
        <name>Mn(2+)</name>
        <dbReference type="ChEBI" id="CHEBI:29035"/>
    </cofactor>
</comment>
<comment type="similarity">
    <text evidence="1">Belongs to the metallo-dependent hydrolases superfamily. Adenine deaminase family.</text>
</comment>
<proteinExistence type="inferred from homology"/>
<name>ADEC2_OENOB</name>
<protein>
    <recommendedName>
        <fullName evidence="1">Adenine deaminase 2</fullName>
        <shortName evidence="1">Adenase 2</shortName>
        <shortName evidence="1">Adenine aminase 2</shortName>
        <ecNumber evidence="1">3.5.4.2</ecNumber>
    </recommendedName>
</protein>
<reference key="1">
    <citation type="journal article" date="2006" name="Proc. Natl. Acad. Sci. U.S.A.">
        <title>Comparative genomics of the lactic acid bacteria.</title>
        <authorList>
            <person name="Makarova K.S."/>
            <person name="Slesarev A."/>
            <person name="Wolf Y.I."/>
            <person name="Sorokin A."/>
            <person name="Mirkin B."/>
            <person name="Koonin E.V."/>
            <person name="Pavlov A."/>
            <person name="Pavlova N."/>
            <person name="Karamychev V."/>
            <person name="Polouchine N."/>
            <person name="Shakhova V."/>
            <person name="Grigoriev I."/>
            <person name="Lou Y."/>
            <person name="Rohksar D."/>
            <person name="Lucas S."/>
            <person name="Huang K."/>
            <person name="Goodstein D.M."/>
            <person name="Hawkins T."/>
            <person name="Plengvidhya V."/>
            <person name="Welker D."/>
            <person name="Hughes J."/>
            <person name="Goh Y."/>
            <person name="Benson A."/>
            <person name="Baldwin K."/>
            <person name="Lee J.-H."/>
            <person name="Diaz-Muniz I."/>
            <person name="Dosti B."/>
            <person name="Smeianov V."/>
            <person name="Wechter W."/>
            <person name="Barabote R."/>
            <person name="Lorca G."/>
            <person name="Altermann E."/>
            <person name="Barrangou R."/>
            <person name="Ganesan B."/>
            <person name="Xie Y."/>
            <person name="Rawsthorne H."/>
            <person name="Tamir D."/>
            <person name="Parker C."/>
            <person name="Breidt F."/>
            <person name="Broadbent J.R."/>
            <person name="Hutkins R."/>
            <person name="O'Sullivan D."/>
            <person name="Steele J."/>
            <person name="Unlu G."/>
            <person name="Saier M.H. Jr."/>
            <person name="Klaenhammer T."/>
            <person name="Richardson P."/>
            <person name="Kozyavkin S."/>
            <person name="Weimer B.C."/>
            <person name="Mills D.A."/>
        </authorList>
    </citation>
    <scope>NUCLEOTIDE SEQUENCE [LARGE SCALE GENOMIC DNA]</scope>
    <source>
        <strain>ATCC BAA-331 / PSU-1</strain>
    </source>
</reference>
<feature type="chain" id="PRO_0000292390" description="Adenine deaminase 2">
    <location>
        <begin position="1"/>
        <end position="567"/>
    </location>
</feature>
<sequence>MIKADLKIINGQIYNTFTRQFTAKEVAIVDGKFFQIADKLSDDFKFEDILDLKGSYVIPGLIDSHMHIESSMATPTNFSETAIRFGTTTVIADAHEIANTSGIKGLKRFMDQPSLIDTFFAIPSSVPSTNPELETTGGIIDLEEVKELLADPRIICLGEAMNFKGITSEPNSLIRKIIALCQKKRPRMPLEGHVPNISKEDLAKFIFAGILSDHTQQTPALIKEKIENGMFIQLQKKSLNKENIETIVKNHFYDYSALVTDDTMADDLINGHLNSIIKLAVKCGLPLEWAIYMTTYTPAQHMHFQDRGVIAPGKIADFVVLNNLDGFSIKNVYKRGVPIDKLSIDDEKPFASEEYHSIYVPNRSAKDFTLRVSKDLKKITANVIEIAAKGTFTKAVKKELLVKDGIVDWQKAGLALLAVQERYGKTGQLTLALVSKSINKSGAIATTWAHDHHNLMVLGTNPDSMAIAYDKVASQQGGYLVVKDKEIVANVQLPIAGIISDEPIDIIGHKLKKVRLAMKDLGYVNTNEIMSLSTLSLLVSPSIKVSDKGIFDVKTQTKIPLLLAGEE</sequence>